<name>ACLY_ACHLY</name>
<accession>P81730</accession>
<proteinExistence type="evidence at protein level"/>
<reference key="1">
    <citation type="submission" date="1999-03" db="UniProtKB">
        <title>Achromolysin, a metalloproteinase from Achromobacter lyticus.</title>
        <authorList>
            <person name="Li S.L."/>
        </authorList>
    </citation>
    <scope>PROTEIN SEQUENCE</scope>
    <source>
        <strain>M497-1</strain>
    </source>
</reference>
<evidence type="ECO:0000305" key="1"/>
<organism>
    <name type="scientific">Achromobacter lyticus</name>
    <dbReference type="NCBI Taxonomy" id="224"/>
    <lineage>
        <taxon>Bacteria</taxon>
        <taxon>Pseudomonadati</taxon>
        <taxon>Pseudomonadota</taxon>
        <taxon>Betaproteobacteria</taxon>
        <taxon>Burkholderiales</taxon>
        <taxon>Alcaligenaceae</taxon>
        <taxon>Achromobacter</taxon>
    </lineage>
</organism>
<feature type="chain" id="PRO_0000078174" description="Achromolysin">
    <location>
        <begin position="1"/>
        <end position="119" status="greater than"/>
    </location>
</feature>
<feature type="non-consecutive residues" evidence="1">
    <location>
        <begin position="42"/>
        <end position="43"/>
    </location>
</feature>
<feature type="non-consecutive residues" evidence="1">
    <location>
        <begin position="62"/>
        <end position="63"/>
    </location>
</feature>
<feature type="non-consecutive residues" evidence="1">
    <location>
        <begin position="80"/>
        <end position="81"/>
    </location>
</feature>
<feature type="non-terminal residue">
    <location>
        <position position="119"/>
    </location>
</feature>
<comment type="function">
    <text>Has staphylolytic activity.</text>
</comment>
<comment type="cofactor">
    <cofactor evidence="1">
        <name>Ca(2+)</name>
        <dbReference type="ChEBI" id="CHEBI:29108"/>
    </cofactor>
    <text evidence="1">Binds 4 Ca(2+) ions per subunit.</text>
</comment>
<comment type="cofactor">
    <cofactor evidence="1">
        <name>Zn(2+)</name>
        <dbReference type="ChEBI" id="CHEBI:29105"/>
    </cofactor>
    <text evidence="1">Binds 1 zinc ion per subunit.</text>
</comment>
<comment type="subcellular location">
    <subcellularLocation>
        <location>Secreted</location>
    </subcellularLocation>
</comment>
<comment type="similarity">
    <text evidence="1">Belongs to the peptidase M4 family.</text>
</comment>
<protein>
    <recommendedName>
        <fullName>Achromolysin</fullName>
        <ecNumber>3.4.24.-</ecNumber>
    </recommendedName>
</protein>
<dbReference type="EC" id="3.4.24.-"/>
<dbReference type="SMR" id="P81730"/>
<dbReference type="GO" id="GO:0005576">
    <property type="term" value="C:extracellular region"/>
    <property type="evidence" value="ECO:0007669"/>
    <property type="project" value="UniProtKB-SubCell"/>
</dbReference>
<dbReference type="GO" id="GO:0008237">
    <property type="term" value="F:metallopeptidase activity"/>
    <property type="evidence" value="ECO:0007669"/>
    <property type="project" value="UniProtKB-KW"/>
</dbReference>
<dbReference type="GO" id="GO:0006508">
    <property type="term" value="P:proteolysis"/>
    <property type="evidence" value="ECO:0007669"/>
    <property type="project" value="UniProtKB-KW"/>
</dbReference>
<dbReference type="Gene3D" id="3.10.170.10">
    <property type="match status" value="1"/>
</dbReference>
<dbReference type="SUPFAM" id="SSF55486">
    <property type="entry name" value="Metalloproteases ('zincins'), catalytic domain"/>
    <property type="match status" value="1"/>
</dbReference>
<sequence>AQVGTGPGGNQKIGQYEYGSGGRPFLDVAQSGSTYTFNTTNLTVNLNHGTSGSTAYSYTGPRNTINGAYSPLNDAHYFGRDYWTPSTNFNQGGQGVRQAAADLGYSTADVIDAFRQVGV</sequence>
<keyword id="KW-0106">Calcium</keyword>
<keyword id="KW-0903">Direct protein sequencing</keyword>
<keyword id="KW-0378">Hydrolase</keyword>
<keyword id="KW-0482">Metalloprotease</keyword>
<keyword id="KW-0645">Protease</keyword>
<keyword id="KW-0964">Secreted</keyword>
<keyword id="KW-0862">Zinc</keyword>